<proteinExistence type="inferred from homology"/>
<sequence length="67" mass="7472">MLSLDFNNELIKAAPIVGTGVADVSARRFFGLSLNEWFYVARIAYTVVXIGAKVVDKIIDWKKATKE</sequence>
<evidence type="ECO:0000255" key="1">
    <source>
        <dbReference type="HAMAP-Rule" id="MF_04108"/>
    </source>
</evidence>
<evidence type="ECO:0000303" key="2">
    <source>
    </source>
</evidence>
<evidence type="ECO:0000305" key="3">
    <source>
    </source>
</evidence>
<evidence type="ECO:0000305" key="4">
    <source>
    </source>
</evidence>
<comment type="function">
    <text evidence="1 3 4">Accumulates harmlessly in the cytoplasmic membrane until it reaches a critical concentration that triggers the formation of micron-scale pores (holes) causing host cell membrane disruption and endolysin escape into the periplasmic space. Participates in determining the precise timing of host cell lysis. Participates with the endolysin and spanin proteins in the sequential events which lead to the programmed host cell lysis releasing the mature viral particles from the host cell.</text>
</comment>
<comment type="subunit">
    <text evidence="1 3">Homomultimer.</text>
</comment>
<comment type="subcellular location">
    <subcellularLocation>
        <location evidence="1 3">Host cell inner membrane</location>
        <topology evidence="1 3">Single-pass type II membrane protein</topology>
        <orientation evidence="1 3">Periplasmic side</orientation>
    </subcellularLocation>
    <text evidence="1 2">Classified as a class II holin although it seems to have only one transmembrane domain.</text>
</comment>
<comment type="similarity">
    <text evidence="1">Belongs to the T7likevirus holin family.</text>
</comment>
<protein>
    <recommendedName>
        <fullName evidence="1">Holin</fullName>
    </recommendedName>
    <alternativeName>
        <fullName>Lysis protein</fullName>
    </alternativeName>
</protein>
<organismHost>
    <name type="scientific">Escherichia coli</name>
    <dbReference type="NCBI Taxonomy" id="562"/>
</organismHost>
<gene>
    <name type="primary">17.5</name>
    <name type="synonym">lys</name>
</gene>
<feature type="chain" id="PRO_0000106532" description="Holin">
    <location>
        <begin position="1"/>
        <end position="67"/>
    </location>
</feature>
<feature type="topological domain" description="Cytoplasmic" evidence="1">
    <location>
        <begin position="1"/>
        <end position="36"/>
    </location>
</feature>
<feature type="transmembrane region" description="Helical; Signal-anchor for type II membrane protein" evidence="1">
    <location>
        <begin position="37"/>
        <end position="55"/>
    </location>
</feature>
<feature type="topological domain" description="Periplasmic" evidence="1">
    <location>
        <begin position="56"/>
        <end position="67"/>
    </location>
</feature>
<accession>P10307</accession>
<dbReference type="EMBL" id="M14784">
    <property type="protein sequence ID" value="AAA92524.1"/>
    <property type="status" value="ALT_TERM"/>
    <property type="molecule type" value="Genomic_DNA"/>
</dbReference>
<dbReference type="PIR" id="B23476">
    <property type="entry name" value="Q7BPT3"/>
</dbReference>
<dbReference type="GO" id="GO:0020002">
    <property type="term" value="C:host cell plasma membrane"/>
    <property type="evidence" value="ECO:0007669"/>
    <property type="project" value="UniProtKB-SubCell"/>
</dbReference>
<dbReference type="GO" id="GO:0016020">
    <property type="term" value="C:membrane"/>
    <property type="evidence" value="ECO:0007669"/>
    <property type="project" value="UniProtKB-UniRule"/>
</dbReference>
<dbReference type="GO" id="GO:0140911">
    <property type="term" value="F:pore-forming activity"/>
    <property type="evidence" value="ECO:0007669"/>
    <property type="project" value="UniProtKB-UniRule"/>
</dbReference>
<dbReference type="GO" id="GO:0044659">
    <property type="term" value="P:viral release from host cell by cytolysis"/>
    <property type="evidence" value="ECO:0007669"/>
    <property type="project" value="InterPro"/>
</dbReference>
<dbReference type="HAMAP" id="MF_04108">
    <property type="entry name" value="HOLIN_T7"/>
    <property type="match status" value="1"/>
</dbReference>
<dbReference type="InterPro" id="IPR019682">
    <property type="entry name" value="Phage_T7_Gp17.5_holin"/>
</dbReference>
<dbReference type="Pfam" id="PF10746">
    <property type="entry name" value="Phage_holin_2_2"/>
    <property type="match status" value="1"/>
</dbReference>
<keyword id="KW-0204">Cytolysis</keyword>
<keyword id="KW-1030">Host cell inner membrane</keyword>
<keyword id="KW-0578">Host cell lysis by virus</keyword>
<keyword id="KW-1032">Host cell membrane</keyword>
<keyword id="KW-1043">Host membrane</keyword>
<keyword id="KW-0472">Membrane</keyword>
<keyword id="KW-0735">Signal-anchor</keyword>
<keyword id="KW-0812">Transmembrane</keyword>
<keyword id="KW-1133">Transmembrane helix</keyword>
<keyword id="KW-1188">Viral release from host cell</keyword>
<name>HOLIN_BPT3</name>
<organism>
    <name type="scientific">Enterobacteria phage T3</name>
    <name type="common">Bacteriophage T3</name>
    <dbReference type="NCBI Taxonomy" id="10759"/>
    <lineage>
        <taxon>Viruses</taxon>
        <taxon>Duplodnaviria</taxon>
        <taxon>Heunggongvirae</taxon>
        <taxon>Uroviricota</taxon>
        <taxon>Caudoviricetes</taxon>
        <taxon>Autographiviridae</taxon>
        <taxon>Studiervirinae</taxon>
        <taxon>Teetrevirus</taxon>
        <taxon>Teetrevirus T3</taxon>
    </lineage>
</organism>
<reference key="1">
    <citation type="journal article" date="1986" name="Virology">
        <title>Cloning and sequencing of the genetic right end of bacteriophage T3 DNA.</title>
        <authorList>
            <person name="Yamada M."/>
            <person name="Fujisawa H."/>
            <person name="Kato H."/>
            <person name="Hamada K."/>
            <person name="Minagawa T."/>
        </authorList>
    </citation>
    <scope>NUCLEOTIDE SEQUENCE [GENOMIC DNA]</scope>
</reference>
<reference key="2">
    <citation type="journal article" date="1986" name="Virology">
        <authorList>
            <person name="Yamada M."/>
            <person name="Fujisawa H."/>
            <person name="Kato H."/>
            <person name="Hamada K."/>
            <person name="Minagawa T."/>
        </authorList>
    </citation>
    <scope>ERRATUM OF PUBMED:3010556</scope>
</reference>
<reference key="3">
    <citation type="journal article" date="1978" name="Virology">
        <title>Mutation in bacteriophage T3 affecting host cell lysis.</title>
        <authorList>
            <person name="Miyazaki J.I."/>
            <person name="Ryo Y."/>
            <person name="Fujisawa H."/>
            <person name="Minagawa T."/>
        </authorList>
    </citation>
    <scope>FUNCTION</scope>
</reference>
<reference key="4">
    <citation type="journal article" date="2000" name="Annu. Rev. Microbiol.">
        <title>Holins: the protein clocks of bacteriophage infections.</title>
        <authorList>
            <person name="Wang I.N."/>
            <person name="Smith D.L."/>
            <person name="Young R."/>
        </authorList>
    </citation>
    <scope>REVIEW</scope>
</reference>